<sequence length="200" mass="21871">MPIGVPKVAYRLPGESTPQWVDLYNRLYRERVLFLGSGLDDELANQLNGIMLYLSAEDASRSLFLYINSPGGSVTAGLSVFDIMNYVQASVTTIGIGFAASMASFILAGGERGSRIALPHCRVMIHQPQGGMEGQASEVVLEKEEIVRLRRLIGRLYVDLTGQPLSTIANDLDRDKYLSAREAREYGLVDLVATTETATV</sequence>
<organism>
    <name type="scientific">Ostreococcus tauri</name>
    <dbReference type="NCBI Taxonomy" id="70448"/>
    <lineage>
        <taxon>Eukaryota</taxon>
        <taxon>Viridiplantae</taxon>
        <taxon>Chlorophyta</taxon>
        <taxon>Mamiellophyceae</taxon>
        <taxon>Mamiellales</taxon>
        <taxon>Bathycoccaceae</taxon>
        <taxon>Ostreococcus</taxon>
    </lineage>
</organism>
<gene>
    <name evidence="1" type="primary">clpP</name>
    <name type="ordered locus">OtCpg00080</name>
</gene>
<evidence type="ECO:0000255" key="1">
    <source>
        <dbReference type="HAMAP-Rule" id="MF_00444"/>
    </source>
</evidence>
<dbReference type="EC" id="3.4.21.92" evidence="1"/>
<dbReference type="EMBL" id="CR954199">
    <property type="protein sequence ID" value="CAL36333.1"/>
    <property type="molecule type" value="Genomic_DNA"/>
</dbReference>
<dbReference type="RefSeq" id="YP_717211.1">
    <property type="nucleotide sequence ID" value="NC_008289.1"/>
</dbReference>
<dbReference type="SMR" id="Q0P3P4"/>
<dbReference type="FunCoup" id="Q0P3P4">
    <property type="interactions" value="6"/>
</dbReference>
<dbReference type="STRING" id="70448.Q0P3P4"/>
<dbReference type="MEROPS" id="S14.002"/>
<dbReference type="GeneID" id="4238814"/>
<dbReference type="KEGG" id="ota:OstapCp08"/>
<dbReference type="eggNOG" id="KOG0840">
    <property type="taxonomic scope" value="Eukaryota"/>
</dbReference>
<dbReference type="InParanoid" id="Q0P3P4"/>
<dbReference type="Proteomes" id="UP000009170">
    <property type="component" value="Chloroplast"/>
</dbReference>
<dbReference type="GO" id="GO:0009570">
    <property type="term" value="C:chloroplast stroma"/>
    <property type="evidence" value="ECO:0007669"/>
    <property type="project" value="UniProtKB-SubCell"/>
</dbReference>
<dbReference type="GO" id="GO:0009368">
    <property type="term" value="C:endopeptidase Clp complex"/>
    <property type="evidence" value="ECO:0007669"/>
    <property type="project" value="TreeGrafter"/>
</dbReference>
<dbReference type="GO" id="GO:0004176">
    <property type="term" value="F:ATP-dependent peptidase activity"/>
    <property type="evidence" value="ECO:0007669"/>
    <property type="project" value="InterPro"/>
</dbReference>
<dbReference type="GO" id="GO:0051117">
    <property type="term" value="F:ATPase binding"/>
    <property type="evidence" value="ECO:0007669"/>
    <property type="project" value="TreeGrafter"/>
</dbReference>
<dbReference type="GO" id="GO:0004252">
    <property type="term" value="F:serine-type endopeptidase activity"/>
    <property type="evidence" value="ECO:0007669"/>
    <property type="project" value="UniProtKB-UniRule"/>
</dbReference>
<dbReference type="GO" id="GO:0006515">
    <property type="term" value="P:protein quality control for misfolded or incompletely synthesized proteins"/>
    <property type="evidence" value="ECO:0007669"/>
    <property type="project" value="TreeGrafter"/>
</dbReference>
<dbReference type="CDD" id="cd07017">
    <property type="entry name" value="S14_ClpP_2"/>
    <property type="match status" value="1"/>
</dbReference>
<dbReference type="Gene3D" id="3.90.226.10">
    <property type="entry name" value="2-enoyl-CoA Hydratase, Chain A, domain 1"/>
    <property type="match status" value="1"/>
</dbReference>
<dbReference type="HAMAP" id="MF_00444">
    <property type="entry name" value="ClpP"/>
    <property type="match status" value="1"/>
</dbReference>
<dbReference type="InterPro" id="IPR001907">
    <property type="entry name" value="ClpP"/>
</dbReference>
<dbReference type="InterPro" id="IPR029045">
    <property type="entry name" value="ClpP/crotonase-like_dom_sf"/>
</dbReference>
<dbReference type="InterPro" id="IPR023562">
    <property type="entry name" value="ClpP/TepA"/>
</dbReference>
<dbReference type="InterPro" id="IPR033135">
    <property type="entry name" value="ClpP_His_AS"/>
</dbReference>
<dbReference type="InterPro" id="IPR018215">
    <property type="entry name" value="ClpP_Ser_AS"/>
</dbReference>
<dbReference type="PANTHER" id="PTHR10381">
    <property type="entry name" value="ATP-DEPENDENT CLP PROTEASE PROTEOLYTIC SUBUNIT"/>
    <property type="match status" value="1"/>
</dbReference>
<dbReference type="PANTHER" id="PTHR10381:SF15">
    <property type="entry name" value="CHLOROPLASTIC ATP-DEPENDENT CLP PROTEASE PROTEOLYTIC SUBUNIT 1"/>
    <property type="match status" value="1"/>
</dbReference>
<dbReference type="Pfam" id="PF00574">
    <property type="entry name" value="CLP_protease"/>
    <property type="match status" value="1"/>
</dbReference>
<dbReference type="PRINTS" id="PR00127">
    <property type="entry name" value="CLPPROTEASEP"/>
</dbReference>
<dbReference type="SUPFAM" id="SSF52096">
    <property type="entry name" value="ClpP/crotonase"/>
    <property type="match status" value="1"/>
</dbReference>
<dbReference type="PROSITE" id="PS00382">
    <property type="entry name" value="CLP_PROTEASE_HIS"/>
    <property type="match status" value="1"/>
</dbReference>
<dbReference type="PROSITE" id="PS00381">
    <property type="entry name" value="CLP_PROTEASE_SER"/>
    <property type="match status" value="1"/>
</dbReference>
<comment type="function">
    <text evidence="1">Cleaves peptides in various proteins in a process that requires ATP hydrolysis. Has a chymotrypsin-like activity. Plays a major role in the degradation of misfolded proteins.</text>
</comment>
<comment type="catalytic activity">
    <reaction evidence="1">
        <text>Hydrolysis of proteins to small peptides in the presence of ATP and magnesium. alpha-casein is the usual test substrate. In the absence of ATP, only oligopeptides shorter than five residues are hydrolyzed (such as succinyl-Leu-Tyr-|-NHMec, and Leu-Tyr-Leu-|-Tyr-Trp, in which cleavage of the -Tyr-|-Leu- and -Tyr-|-Trp bonds also occurs).</text>
        <dbReference type="EC" id="3.4.21.92"/>
    </reaction>
</comment>
<comment type="subunit">
    <text>Component of the chloroplastic Clp protease core complex.</text>
</comment>
<comment type="subcellular location">
    <subcellularLocation>
        <location evidence="1">Plastid</location>
        <location evidence="1">Chloroplast stroma</location>
    </subcellularLocation>
</comment>
<comment type="similarity">
    <text evidence="1">Belongs to the peptidase S14 family.</text>
</comment>
<protein>
    <recommendedName>
        <fullName evidence="1">ATP-dependent Clp protease proteolytic subunit</fullName>
        <ecNumber evidence="1">3.4.21.92</ecNumber>
    </recommendedName>
    <alternativeName>
        <fullName evidence="1">Endopeptidase Clp</fullName>
    </alternativeName>
</protein>
<proteinExistence type="inferred from homology"/>
<reference key="1">
    <citation type="journal article" date="2007" name="Mol. Biol. Evol.">
        <title>The complete chloroplast and mitochondrial DNA sequence of Ostreococcus tauri: organelle genomes of the smallest eukaryote are examples of compaction.</title>
        <authorList>
            <person name="Robbens S."/>
            <person name="Derelle E."/>
            <person name="Ferraz C."/>
            <person name="Wuyts J."/>
            <person name="Moreau H."/>
            <person name="Van de Peer Y."/>
        </authorList>
    </citation>
    <scope>NUCLEOTIDE SEQUENCE [LARGE SCALE GENOMIC DNA]</scope>
    <source>
        <strain>OTTH0595</strain>
    </source>
</reference>
<name>CLPP_OSTTA</name>
<keyword id="KW-0150">Chloroplast</keyword>
<keyword id="KW-0378">Hydrolase</keyword>
<keyword id="KW-0934">Plastid</keyword>
<keyword id="KW-0645">Protease</keyword>
<keyword id="KW-1185">Reference proteome</keyword>
<keyword id="KW-0720">Serine protease</keyword>
<accession>Q0P3P4</accession>
<geneLocation type="chloroplast"/>
<feature type="chain" id="PRO_0000275295" description="ATP-dependent Clp protease proteolytic subunit">
    <location>
        <begin position="1"/>
        <end position="200"/>
    </location>
</feature>
<feature type="active site" description="Nucleophile" evidence="1">
    <location>
        <position position="101"/>
    </location>
</feature>
<feature type="active site" evidence="1">
    <location>
        <position position="126"/>
    </location>
</feature>